<dbReference type="EC" id="7.1.1.2" evidence="1"/>
<dbReference type="EMBL" id="Y10524">
    <property type="protein sequence ID" value="CAA71547.1"/>
    <property type="molecule type" value="Genomic_DNA"/>
</dbReference>
<dbReference type="PIR" id="T11439">
    <property type="entry name" value="T11439"/>
</dbReference>
<dbReference type="RefSeq" id="NP_007405.1">
    <property type="nucleotide sequence ID" value="NC_001794.1"/>
</dbReference>
<dbReference type="SMR" id="P92670"/>
<dbReference type="GeneID" id="808080"/>
<dbReference type="CTD" id="4541"/>
<dbReference type="GO" id="GO:0005743">
    <property type="term" value="C:mitochondrial inner membrane"/>
    <property type="evidence" value="ECO:0000250"/>
    <property type="project" value="UniProtKB"/>
</dbReference>
<dbReference type="GO" id="GO:0008137">
    <property type="term" value="F:NADH dehydrogenase (ubiquinone) activity"/>
    <property type="evidence" value="ECO:0000250"/>
    <property type="project" value="UniProtKB"/>
</dbReference>
<dbReference type="GO" id="GO:0006120">
    <property type="term" value="P:mitochondrial electron transport, NADH to ubiquinone"/>
    <property type="evidence" value="ECO:0000250"/>
    <property type="project" value="UniProtKB"/>
</dbReference>
<dbReference type="GO" id="GO:0032981">
    <property type="term" value="P:mitochondrial respiratory chain complex I assembly"/>
    <property type="evidence" value="ECO:0000250"/>
    <property type="project" value="UniProtKB"/>
</dbReference>
<dbReference type="Gene3D" id="1.20.120.1200">
    <property type="entry name" value="NADH-ubiquinone/plastoquinone oxidoreductase chain 6, subunit NuoJ"/>
    <property type="match status" value="1"/>
</dbReference>
<dbReference type="InterPro" id="IPR050269">
    <property type="entry name" value="ComplexI_Subunit6"/>
</dbReference>
<dbReference type="InterPro" id="IPR001457">
    <property type="entry name" value="NADH_UbQ/plastoQ_OxRdtase_su6"/>
</dbReference>
<dbReference type="InterPro" id="IPR042106">
    <property type="entry name" value="Nuo/plastoQ_OxRdtase_6_NuoJ"/>
</dbReference>
<dbReference type="PANTHER" id="PTHR11435">
    <property type="entry name" value="NADH UBIQUINONE OXIDOREDUCTASE SUBUNIT ND6"/>
    <property type="match status" value="1"/>
</dbReference>
<dbReference type="PANTHER" id="PTHR11435:SF1">
    <property type="entry name" value="NADH-UBIQUINONE OXIDOREDUCTASE CHAIN 6"/>
    <property type="match status" value="1"/>
</dbReference>
<dbReference type="Pfam" id="PF00499">
    <property type="entry name" value="Oxidored_q3"/>
    <property type="match status" value="1"/>
</dbReference>
<geneLocation type="mitochondrion"/>
<name>NU6M_OSPRO</name>
<gene>
    <name type="primary">MT-ND6</name>
    <name type="synonym">MTND6</name>
    <name type="synonym">NADH6</name>
    <name type="synonym">ND6</name>
</gene>
<comment type="function">
    <text evidence="1">Core subunit of the mitochondrial membrane respiratory chain NADH dehydrogenase (Complex I) which catalyzes electron transfer from NADH through the respiratory chain, using ubiquinone as an electron acceptor. Essential for the catalytic activity and assembly of complex I.</text>
</comment>
<comment type="catalytic activity">
    <reaction evidence="1">
        <text>a ubiquinone + NADH + 5 H(+)(in) = a ubiquinol + NAD(+) + 4 H(+)(out)</text>
        <dbReference type="Rhea" id="RHEA:29091"/>
        <dbReference type="Rhea" id="RHEA-COMP:9565"/>
        <dbReference type="Rhea" id="RHEA-COMP:9566"/>
        <dbReference type="ChEBI" id="CHEBI:15378"/>
        <dbReference type="ChEBI" id="CHEBI:16389"/>
        <dbReference type="ChEBI" id="CHEBI:17976"/>
        <dbReference type="ChEBI" id="CHEBI:57540"/>
        <dbReference type="ChEBI" id="CHEBI:57945"/>
        <dbReference type="EC" id="7.1.1.2"/>
    </reaction>
</comment>
<comment type="subunit">
    <text evidence="2">Core subunit of respiratory chain NADH dehydrogenase (Complex I) which is composed of 45 different subunits.</text>
</comment>
<comment type="subcellular location">
    <subcellularLocation>
        <location evidence="2">Mitochondrion inner membrane</location>
        <topology evidence="3">Multi-pass membrane protein</topology>
    </subcellularLocation>
</comment>
<comment type="similarity">
    <text evidence="4">Belongs to the complex I subunit 6 family.</text>
</comment>
<sequence length="167" mass="18008">MKMMVVFLFSILLVFGFVAFASKPSPVYGGLSLVVSGGLGCAIVVSLEDVFLGLIVFLIYLGGMLVVFGYTAAMATEEYPESWVGNTVALSMLLFTVIVESAWYLMSGEVKVSMDIELFDIIGGYCVGQDYSGVSLLYGCGGWALVLLGWILFITIYVVLEVVRGCN</sequence>
<proteinExistence type="inferred from homology"/>
<feature type="chain" id="PRO_0000118301" description="NADH-ubiquinone oxidoreductase chain 6">
    <location>
        <begin position="1"/>
        <end position="167"/>
    </location>
</feature>
<feature type="transmembrane region" description="Helical" evidence="3">
    <location>
        <begin position="1"/>
        <end position="21"/>
    </location>
</feature>
<feature type="transmembrane region" description="Helical" evidence="3">
    <location>
        <begin position="27"/>
        <end position="47"/>
    </location>
</feature>
<feature type="transmembrane region" description="Helical" evidence="3">
    <location>
        <begin position="50"/>
        <end position="70"/>
    </location>
</feature>
<feature type="transmembrane region" description="Helical" evidence="3">
    <location>
        <begin position="88"/>
        <end position="108"/>
    </location>
</feature>
<feature type="transmembrane region" description="Helical" evidence="3">
    <location>
        <begin position="143"/>
        <end position="163"/>
    </location>
</feature>
<protein>
    <recommendedName>
        <fullName>NADH-ubiquinone oxidoreductase chain 6</fullName>
        <ecNumber evidence="1">7.1.1.2</ecNumber>
    </recommendedName>
    <alternativeName>
        <fullName>NADH dehydrogenase subunit 6</fullName>
    </alternativeName>
</protein>
<keyword id="KW-0249">Electron transport</keyword>
<keyword id="KW-0472">Membrane</keyword>
<keyword id="KW-0496">Mitochondrion</keyword>
<keyword id="KW-0999">Mitochondrion inner membrane</keyword>
<keyword id="KW-0520">NAD</keyword>
<keyword id="KW-0679">Respiratory chain</keyword>
<keyword id="KW-1278">Translocase</keyword>
<keyword id="KW-0812">Transmembrane</keyword>
<keyword id="KW-1133">Transmembrane helix</keyword>
<keyword id="KW-0813">Transport</keyword>
<keyword id="KW-0830">Ubiquinone</keyword>
<organism>
    <name type="scientific">Osphranter robustus</name>
    <name type="common">Wallaroo</name>
    <name type="synonym">Macropus robustus</name>
    <dbReference type="NCBI Taxonomy" id="9319"/>
    <lineage>
        <taxon>Eukaryota</taxon>
        <taxon>Metazoa</taxon>
        <taxon>Chordata</taxon>
        <taxon>Craniata</taxon>
        <taxon>Vertebrata</taxon>
        <taxon>Euteleostomi</taxon>
        <taxon>Mammalia</taxon>
        <taxon>Metatheria</taxon>
        <taxon>Diprotodontia</taxon>
        <taxon>Macropodidae</taxon>
        <taxon>Osphranter</taxon>
    </lineage>
</organism>
<accession>P92670</accession>
<reference key="1">
    <citation type="journal article" date="1997" name="Proc. Natl. Acad. Sci. U.S.A.">
        <title>The complete mitochondrial genome of the wallaroo (Macropus robustus) and the phylogenetic relationship among Monotremata, Marsupialia, and Eutheria.</title>
        <authorList>
            <person name="Janke A."/>
            <person name="Xu X."/>
            <person name="Arnason U."/>
        </authorList>
    </citation>
    <scope>NUCLEOTIDE SEQUENCE [GENOMIC DNA]</scope>
</reference>
<evidence type="ECO:0000250" key="1">
    <source>
        <dbReference type="UniProtKB" id="P03923"/>
    </source>
</evidence>
<evidence type="ECO:0000250" key="2">
    <source>
        <dbReference type="UniProtKB" id="P03924"/>
    </source>
</evidence>
<evidence type="ECO:0000255" key="3"/>
<evidence type="ECO:0000305" key="4"/>